<evidence type="ECO:0000255" key="1">
    <source>
        <dbReference type="HAMAP-Rule" id="MF_00170"/>
    </source>
</evidence>
<organism>
    <name type="scientific">Sinorhizobium fredii (strain NBRC 101917 / NGR234)</name>
    <dbReference type="NCBI Taxonomy" id="394"/>
    <lineage>
        <taxon>Bacteria</taxon>
        <taxon>Pseudomonadati</taxon>
        <taxon>Pseudomonadota</taxon>
        <taxon>Alphaproteobacteria</taxon>
        <taxon>Hyphomicrobiales</taxon>
        <taxon>Rhizobiaceae</taxon>
        <taxon>Sinorhizobium/Ensifer group</taxon>
        <taxon>Sinorhizobium</taxon>
    </lineage>
</organism>
<dbReference type="EC" id="5.3.1.6" evidence="1"/>
<dbReference type="EMBL" id="CP001389">
    <property type="protein sequence ID" value="ACP25466.1"/>
    <property type="molecule type" value="Genomic_DNA"/>
</dbReference>
<dbReference type="RefSeq" id="WP_012708235.1">
    <property type="nucleotide sequence ID" value="NC_012587.1"/>
</dbReference>
<dbReference type="RefSeq" id="YP_002826219.1">
    <property type="nucleotide sequence ID" value="NC_012587.1"/>
</dbReference>
<dbReference type="SMR" id="C3MDE7"/>
<dbReference type="STRING" id="394.NGR_c17020"/>
<dbReference type="KEGG" id="rhi:NGR_c17020"/>
<dbReference type="PATRIC" id="fig|394.7.peg.4522"/>
<dbReference type="eggNOG" id="COG0120">
    <property type="taxonomic scope" value="Bacteria"/>
</dbReference>
<dbReference type="HOGENOM" id="CLU_056590_1_0_5"/>
<dbReference type="OrthoDB" id="5870696at2"/>
<dbReference type="UniPathway" id="UPA00115">
    <property type="reaction ID" value="UER00412"/>
</dbReference>
<dbReference type="Proteomes" id="UP000001054">
    <property type="component" value="Chromosome"/>
</dbReference>
<dbReference type="GO" id="GO:0004751">
    <property type="term" value="F:ribose-5-phosphate isomerase activity"/>
    <property type="evidence" value="ECO:0007669"/>
    <property type="project" value="UniProtKB-UniRule"/>
</dbReference>
<dbReference type="GO" id="GO:0009052">
    <property type="term" value="P:pentose-phosphate shunt, non-oxidative branch"/>
    <property type="evidence" value="ECO:0007669"/>
    <property type="project" value="UniProtKB-UniRule"/>
</dbReference>
<dbReference type="CDD" id="cd01398">
    <property type="entry name" value="RPI_A"/>
    <property type="match status" value="1"/>
</dbReference>
<dbReference type="FunFam" id="3.40.50.1360:FF:000001">
    <property type="entry name" value="Ribose-5-phosphate isomerase A"/>
    <property type="match status" value="1"/>
</dbReference>
<dbReference type="Gene3D" id="3.30.70.260">
    <property type="match status" value="1"/>
</dbReference>
<dbReference type="Gene3D" id="3.40.50.1360">
    <property type="match status" value="1"/>
</dbReference>
<dbReference type="HAMAP" id="MF_00170">
    <property type="entry name" value="Rib_5P_isom_A"/>
    <property type="match status" value="1"/>
</dbReference>
<dbReference type="InterPro" id="IPR037171">
    <property type="entry name" value="NagB/RpiA_transferase-like"/>
</dbReference>
<dbReference type="InterPro" id="IPR050262">
    <property type="entry name" value="Ribose-5P_isomerase"/>
</dbReference>
<dbReference type="InterPro" id="IPR020672">
    <property type="entry name" value="Ribose5P_isomerase_typA_subgr"/>
</dbReference>
<dbReference type="InterPro" id="IPR004788">
    <property type="entry name" value="Ribose5P_isomerase_type_A"/>
</dbReference>
<dbReference type="NCBIfam" id="NF001924">
    <property type="entry name" value="PRK00702.1"/>
    <property type="match status" value="1"/>
</dbReference>
<dbReference type="NCBIfam" id="TIGR00021">
    <property type="entry name" value="rpiA"/>
    <property type="match status" value="1"/>
</dbReference>
<dbReference type="PANTHER" id="PTHR43748">
    <property type="entry name" value="RIBOSE-5-PHOSPHATE ISOMERASE 3, CHLOROPLASTIC-RELATED"/>
    <property type="match status" value="1"/>
</dbReference>
<dbReference type="PANTHER" id="PTHR43748:SF3">
    <property type="entry name" value="RIBOSE-5-PHOSPHATE ISOMERASE 3, CHLOROPLASTIC-RELATED"/>
    <property type="match status" value="1"/>
</dbReference>
<dbReference type="Pfam" id="PF06026">
    <property type="entry name" value="Rib_5-P_isom_A"/>
    <property type="match status" value="1"/>
</dbReference>
<dbReference type="SUPFAM" id="SSF75445">
    <property type="entry name" value="D-ribose-5-phosphate isomerase (RpiA), lid domain"/>
    <property type="match status" value="1"/>
</dbReference>
<dbReference type="SUPFAM" id="SSF100950">
    <property type="entry name" value="NagB/RpiA/CoA transferase-like"/>
    <property type="match status" value="1"/>
</dbReference>
<gene>
    <name evidence="1" type="primary">rpiA</name>
    <name type="ordered locus">NGR_c17020</name>
</gene>
<reference key="1">
    <citation type="journal article" date="2009" name="Appl. Environ. Microbiol.">
        <title>Rhizobium sp. strain NGR234 possesses a remarkable number of secretion systems.</title>
        <authorList>
            <person name="Schmeisser C."/>
            <person name="Liesegang H."/>
            <person name="Krysciak D."/>
            <person name="Bakkou N."/>
            <person name="Le Quere A."/>
            <person name="Wollherr A."/>
            <person name="Heinemeyer I."/>
            <person name="Morgenstern B."/>
            <person name="Pommerening-Roeser A."/>
            <person name="Flores M."/>
            <person name="Palacios R."/>
            <person name="Brenner S."/>
            <person name="Gottschalk G."/>
            <person name="Schmitz R.A."/>
            <person name="Broughton W.J."/>
            <person name="Perret X."/>
            <person name="Strittmatter A.W."/>
            <person name="Streit W.R."/>
        </authorList>
    </citation>
    <scope>NUCLEOTIDE SEQUENCE [LARGE SCALE GENOMIC DNA]</scope>
    <source>
        <strain>NBRC 101917 / NGR234</strain>
    </source>
</reference>
<sequence>MDARQMKIKAAQAALGYVESGMRLGIGTGSTAEEFVRLLAEKVASGFQIQGVPTSERTARLCLELGVPLKSLDELPELDLTIDGADEVDGKLRLIKGGGGALLREKIVASASERMIVIADESKVVDVLGAFKLPIEVNQFGLTTTRLAIEKVAARLGLTGDIGLRASGDGPFMTDGGHLILDASFGRIPDAEALAAGLNAIPGVVEHGLFLGMASLAIIAGPEGARTLTAG</sequence>
<accession>C3MDE7</accession>
<keyword id="KW-0413">Isomerase</keyword>
<keyword id="KW-1185">Reference proteome</keyword>
<feature type="chain" id="PRO_1000194717" description="Ribose-5-phosphate isomerase A">
    <location>
        <begin position="1"/>
        <end position="231"/>
    </location>
</feature>
<feature type="active site" description="Proton acceptor" evidence="1">
    <location>
        <position position="105"/>
    </location>
</feature>
<feature type="binding site" evidence="1">
    <location>
        <begin position="28"/>
        <end position="31"/>
    </location>
    <ligand>
        <name>substrate</name>
    </ligand>
</feature>
<feature type="binding site" evidence="1">
    <location>
        <begin position="83"/>
        <end position="86"/>
    </location>
    <ligand>
        <name>substrate</name>
    </ligand>
</feature>
<feature type="binding site" evidence="1">
    <location>
        <begin position="96"/>
        <end position="99"/>
    </location>
    <ligand>
        <name>substrate</name>
    </ligand>
</feature>
<feature type="binding site" evidence="1">
    <location>
        <position position="123"/>
    </location>
    <ligand>
        <name>substrate</name>
    </ligand>
</feature>
<name>RPIA_SINFN</name>
<comment type="function">
    <text evidence="1">Catalyzes the reversible conversion of ribose-5-phosphate to ribulose 5-phosphate.</text>
</comment>
<comment type="catalytic activity">
    <reaction evidence="1">
        <text>aldehydo-D-ribose 5-phosphate = D-ribulose 5-phosphate</text>
        <dbReference type="Rhea" id="RHEA:14657"/>
        <dbReference type="ChEBI" id="CHEBI:58121"/>
        <dbReference type="ChEBI" id="CHEBI:58273"/>
        <dbReference type="EC" id="5.3.1.6"/>
    </reaction>
</comment>
<comment type="pathway">
    <text evidence="1">Carbohydrate degradation; pentose phosphate pathway; D-ribose 5-phosphate from D-ribulose 5-phosphate (non-oxidative stage): step 1/1.</text>
</comment>
<comment type="subunit">
    <text evidence="1">Homodimer.</text>
</comment>
<comment type="similarity">
    <text evidence="1">Belongs to the ribose 5-phosphate isomerase family.</text>
</comment>
<proteinExistence type="inferred from homology"/>
<protein>
    <recommendedName>
        <fullName evidence="1">Ribose-5-phosphate isomerase A</fullName>
        <ecNumber evidence="1">5.3.1.6</ecNumber>
    </recommendedName>
    <alternativeName>
        <fullName evidence="1">Phosphoriboisomerase A</fullName>
        <shortName evidence="1">PRI</shortName>
    </alternativeName>
</protein>